<accession>B4E7V8</accession>
<keyword id="KW-0648">Protein biosynthesis</keyword>
<keyword id="KW-0808">Transferase</keyword>
<organism>
    <name type="scientific">Burkholderia cenocepacia (strain ATCC BAA-245 / DSM 16553 / LMG 16656 / NCTC 13227 / J2315 / CF5610)</name>
    <name type="common">Burkholderia cepacia (strain J2315)</name>
    <dbReference type="NCBI Taxonomy" id="216591"/>
    <lineage>
        <taxon>Bacteria</taxon>
        <taxon>Pseudomonadati</taxon>
        <taxon>Pseudomonadota</taxon>
        <taxon>Betaproteobacteria</taxon>
        <taxon>Burkholderiales</taxon>
        <taxon>Burkholderiaceae</taxon>
        <taxon>Burkholderia</taxon>
        <taxon>Burkholderia cepacia complex</taxon>
    </lineage>
</organism>
<sequence length="330" mass="34561">MTHTLRVIFAGTPEFAAAALAAIHEAGFPVPLVLTQPDRPAGRGMKLQASAVKRYAVEHGMTVAQPPSLRRAGKYPAEAADAIELLRTTQHDVMVVAAYGLLLPQEVLDIPRAGCINIHASLLPRWRGAAPIHRAIEAGDAETGVTLMQMDVGLDTGAMIEEARIAIAPDDTTATLHDRLAADGARLIVDALVRLERDGTLPATPQPADGVTYAEKIGKHEAALDWRKPADVLARQVRAFDPFPGGVATLDGAAIKLWAAEPVAARGTMANAAPGTIVEAAPEGVVVACGSGALRVTQLQKPGGKRLPAREFLAGSPLAAGQRFALPDVD</sequence>
<evidence type="ECO:0000255" key="1">
    <source>
        <dbReference type="HAMAP-Rule" id="MF_00182"/>
    </source>
</evidence>
<comment type="function">
    <text evidence="1">Attaches a formyl group to the free amino group of methionyl-tRNA(fMet). The formyl group appears to play a dual role in the initiator identity of N-formylmethionyl-tRNA by promoting its recognition by IF2 and preventing the misappropriation of this tRNA by the elongation apparatus.</text>
</comment>
<comment type="catalytic activity">
    <reaction evidence="1">
        <text>L-methionyl-tRNA(fMet) + (6R)-10-formyltetrahydrofolate = N-formyl-L-methionyl-tRNA(fMet) + (6S)-5,6,7,8-tetrahydrofolate + H(+)</text>
        <dbReference type="Rhea" id="RHEA:24380"/>
        <dbReference type="Rhea" id="RHEA-COMP:9952"/>
        <dbReference type="Rhea" id="RHEA-COMP:9953"/>
        <dbReference type="ChEBI" id="CHEBI:15378"/>
        <dbReference type="ChEBI" id="CHEBI:57453"/>
        <dbReference type="ChEBI" id="CHEBI:78530"/>
        <dbReference type="ChEBI" id="CHEBI:78844"/>
        <dbReference type="ChEBI" id="CHEBI:195366"/>
        <dbReference type="EC" id="2.1.2.9"/>
    </reaction>
</comment>
<comment type="similarity">
    <text evidence="1">Belongs to the Fmt family.</text>
</comment>
<name>FMT_BURCJ</name>
<gene>
    <name evidence="1" type="primary">fmt</name>
    <name type="ordered locus">BceJ2315_04640</name>
    <name type="ORF">BCAL0466</name>
</gene>
<feature type="chain" id="PRO_1000098385" description="Methionyl-tRNA formyltransferase">
    <location>
        <begin position="1"/>
        <end position="330"/>
    </location>
</feature>
<feature type="binding site" evidence="1">
    <location>
        <begin position="121"/>
        <end position="124"/>
    </location>
    <ligand>
        <name>(6S)-5,6,7,8-tetrahydrofolate</name>
        <dbReference type="ChEBI" id="CHEBI:57453"/>
    </ligand>
</feature>
<proteinExistence type="inferred from homology"/>
<protein>
    <recommendedName>
        <fullName evidence="1">Methionyl-tRNA formyltransferase</fullName>
        <ecNumber evidence="1">2.1.2.9</ecNumber>
    </recommendedName>
</protein>
<reference key="1">
    <citation type="journal article" date="2009" name="J. Bacteriol.">
        <title>The genome of Burkholderia cenocepacia J2315, an epidemic pathogen of cystic fibrosis patients.</title>
        <authorList>
            <person name="Holden M.T."/>
            <person name="Seth-Smith H.M."/>
            <person name="Crossman L.C."/>
            <person name="Sebaihia M."/>
            <person name="Bentley S.D."/>
            <person name="Cerdeno-Tarraga A.M."/>
            <person name="Thomson N.R."/>
            <person name="Bason N."/>
            <person name="Quail M.A."/>
            <person name="Sharp S."/>
            <person name="Cherevach I."/>
            <person name="Churcher C."/>
            <person name="Goodhead I."/>
            <person name="Hauser H."/>
            <person name="Holroyd N."/>
            <person name="Mungall K."/>
            <person name="Scott P."/>
            <person name="Walker D."/>
            <person name="White B."/>
            <person name="Rose H."/>
            <person name="Iversen P."/>
            <person name="Mil-Homens D."/>
            <person name="Rocha E.P."/>
            <person name="Fialho A.M."/>
            <person name="Baldwin A."/>
            <person name="Dowson C."/>
            <person name="Barrell B.G."/>
            <person name="Govan J.R."/>
            <person name="Vandamme P."/>
            <person name="Hart C.A."/>
            <person name="Mahenthiralingam E."/>
            <person name="Parkhill J."/>
        </authorList>
    </citation>
    <scope>NUCLEOTIDE SEQUENCE [LARGE SCALE GENOMIC DNA]</scope>
    <source>
        <strain>ATCC BAA-245 / DSM 16553 / LMG 16656 / NCTC 13227 / J2315 / CF5610</strain>
    </source>
</reference>
<dbReference type="EC" id="2.1.2.9" evidence="1"/>
<dbReference type="EMBL" id="AM747720">
    <property type="protein sequence ID" value="CAR50777.1"/>
    <property type="molecule type" value="Genomic_DNA"/>
</dbReference>
<dbReference type="RefSeq" id="WP_006485789.1">
    <property type="nucleotide sequence ID" value="NC_011000.1"/>
</dbReference>
<dbReference type="SMR" id="B4E7V8"/>
<dbReference type="KEGG" id="bcj:BCAL0466"/>
<dbReference type="eggNOG" id="COG0223">
    <property type="taxonomic scope" value="Bacteria"/>
</dbReference>
<dbReference type="HOGENOM" id="CLU_033347_1_2_4"/>
<dbReference type="BioCyc" id="BCEN216591:G1G1V-533-MONOMER"/>
<dbReference type="Proteomes" id="UP000001035">
    <property type="component" value="Chromosome 1"/>
</dbReference>
<dbReference type="GO" id="GO:0005829">
    <property type="term" value="C:cytosol"/>
    <property type="evidence" value="ECO:0007669"/>
    <property type="project" value="TreeGrafter"/>
</dbReference>
<dbReference type="GO" id="GO:0004479">
    <property type="term" value="F:methionyl-tRNA formyltransferase activity"/>
    <property type="evidence" value="ECO:0007669"/>
    <property type="project" value="UniProtKB-UniRule"/>
</dbReference>
<dbReference type="CDD" id="cd08646">
    <property type="entry name" value="FMT_core_Met-tRNA-FMT_N"/>
    <property type="match status" value="1"/>
</dbReference>
<dbReference type="CDD" id="cd08704">
    <property type="entry name" value="Met_tRNA_FMT_C"/>
    <property type="match status" value="1"/>
</dbReference>
<dbReference type="Gene3D" id="3.10.25.10">
    <property type="entry name" value="Formyl transferase, C-terminal domain"/>
    <property type="match status" value="1"/>
</dbReference>
<dbReference type="Gene3D" id="3.40.50.170">
    <property type="entry name" value="Formyl transferase, N-terminal domain"/>
    <property type="match status" value="1"/>
</dbReference>
<dbReference type="HAMAP" id="MF_00182">
    <property type="entry name" value="Formyl_trans"/>
    <property type="match status" value="1"/>
</dbReference>
<dbReference type="InterPro" id="IPR005794">
    <property type="entry name" value="Fmt"/>
</dbReference>
<dbReference type="InterPro" id="IPR005793">
    <property type="entry name" value="Formyl_trans_C"/>
</dbReference>
<dbReference type="InterPro" id="IPR037022">
    <property type="entry name" value="Formyl_trans_C_sf"/>
</dbReference>
<dbReference type="InterPro" id="IPR002376">
    <property type="entry name" value="Formyl_transf_N"/>
</dbReference>
<dbReference type="InterPro" id="IPR036477">
    <property type="entry name" value="Formyl_transf_N_sf"/>
</dbReference>
<dbReference type="InterPro" id="IPR011034">
    <property type="entry name" value="Formyl_transferase-like_C_sf"/>
</dbReference>
<dbReference type="InterPro" id="IPR001555">
    <property type="entry name" value="GART_AS"/>
</dbReference>
<dbReference type="InterPro" id="IPR044135">
    <property type="entry name" value="Met-tRNA-FMT_C"/>
</dbReference>
<dbReference type="InterPro" id="IPR041711">
    <property type="entry name" value="Met-tRNA-FMT_N"/>
</dbReference>
<dbReference type="NCBIfam" id="TIGR00460">
    <property type="entry name" value="fmt"/>
    <property type="match status" value="1"/>
</dbReference>
<dbReference type="PANTHER" id="PTHR11138">
    <property type="entry name" value="METHIONYL-TRNA FORMYLTRANSFERASE"/>
    <property type="match status" value="1"/>
</dbReference>
<dbReference type="PANTHER" id="PTHR11138:SF5">
    <property type="entry name" value="METHIONYL-TRNA FORMYLTRANSFERASE, MITOCHONDRIAL"/>
    <property type="match status" value="1"/>
</dbReference>
<dbReference type="Pfam" id="PF02911">
    <property type="entry name" value="Formyl_trans_C"/>
    <property type="match status" value="1"/>
</dbReference>
<dbReference type="Pfam" id="PF00551">
    <property type="entry name" value="Formyl_trans_N"/>
    <property type="match status" value="1"/>
</dbReference>
<dbReference type="SUPFAM" id="SSF50486">
    <property type="entry name" value="FMT C-terminal domain-like"/>
    <property type="match status" value="1"/>
</dbReference>
<dbReference type="SUPFAM" id="SSF53328">
    <property type="entry name" value="Formyltransferase"/>
    <property type="match status" value="1"/>
</dbReference>
<dbReference type="PROSITE" id="PS00373">
    <property type="entry name" value="GART"/>
    <property type="match status" value="1"/>
</dbReference>